<gene>
    <name type="primary">Cldnd1</name>
    <name type="synonym">Cldn25</name>
    <name type="synonym">D11Moh34</name>
</gene>
<reference key="1">
    <citation type="journal article" date="2005" name="Science">
        <title>The transcriptional landscape of the mammalian genome.</title>
        <authorList>
            <person name="Carninci P."/>
            <person name="Kasukawa T."/>
            <person name="Katayama S."/>
            <person name="Gough J."/>
            <person name="Frith M.C."/>
            <person name="Maeda N."/>
            <person name="Oyama R."/>
            <person name="Ravasi T."/>
            <person name="Lenhard B."/>
            <person name="Wells C."/>
            <person name="Kodzius R."/>
            <person name="Shimokawa K."/>
            <person name="Bajic V.B."/>
            <person name="Brenner S.E."/>
            <person name="Batalov S."/>
            <person name="Forrest A.R."/>
            <person name="Zavolan M."/>
            <person name="Davis M.J."/>
            <person name="Wilming L.G."/>
            <person name="Aidinis V."/>
            <person name="Allen J.E."/>
            <person name="Ambesi-Impiombato A."/>
            <person name="Apweiler R."/>
            <person name="Aturaliya R.N."/>
            <person name="Bailey T.L."/>
            <person name="Bansal M."/>
            <person name="Baxter L."/>
            <person name="Beisel K.W."/>
            <person name="Bersano T."/>
            <person name="Bono H."/>
            <person name="Chalk A.M."/>
            <person name="Chiu K.P."/>
            <person name="Choudhary V."/>
            <person name="Christoffels A."/>
            <person name="Clutterbuck D.R."/>
            <person name="Crowe M.L."/>
            <person name="Dalla E."/>
            <person name="Dalrymple B.P."/>
            <person name="de Bono B."/>
            <person name="Della Gatta G."/>
            <person name="di Bernardo D."/>
            <person name="Down T."/>
            <person name="Engstrom P."/>
            <person name="Fagiolini M."/>
            <person name="Faulkner G."/>
            <person name="Fletcher C.F."/>
            <person name="Fukushima T."/>
            <person name="Furuno M."/>
            <person name="Futaki S."/>
            <person name="Gariboldi M."/>
            <person name="Georgii-Hemming P."/>
            <person name="Gingeras T.R."/>
            <person name="Gojobori T."/>
            <person name="Green R.E."/>
            <person name="Gustincich S."/>
            <person name="Harbers M."/>
            <person name="Hayashi Y."/>
            <person name="Hensch T.K."/>
            <person name="Hirokawa N."/>
            <person name="Hill D."/>
            <person name="Huminiecki L."/>
            <person name="Iacono M."/>
            <person name="Ikeo K."/>
            <person name="Iwama A."/>
            <person name="Ishikawa T."/>
            <person name="Jakt M."/>
            <person name="Kanapin A."/>
            <person name="Katoh M."/>
            <person name="Kawasawa Y."/>
            <person name="Kelso J."/>
            <person name="Kitamura H."/>
            <person name="Kitano H."/>
            <person name="Kollias G."/>
            <person name="Krishnan S.P."/>
            <person name="Kruger A."/>
            <person name="Kummerfeld S.K."/>
            <person name="Kurochkin I.V."/>
            <person name="Lareau L.F."/>
            <person name="Lazarevic D."/>
            <person name="Lipovich L."/>
            <person name="Liu J."/>
            <person name="Liuni S."/>
            <person name="McWilliam S."/>
            <person name="Madan Babu M."/>
            <person name="Madera M."/>
            <person name="Marchionni L."/>
            <person name="Matsuda H."/>
            <person name="Matsuzawa S."/>
            <person name="Miki H."/>
            <person name="Mignone F."/>
            <person name="Miyake S."/>
            <person name="Morris K."/>
            <person name="Mottagui-Tabar S."/>
            <person name="Mulder N."/>
            <person name="Nakano N."/>
            <person name="Nakauchi H."/>
            <person name="Ng P."/>
            <person name="Nilsson R."/>
            <person name="Nishiguchi S."/>
            <person name="Nishikawa S."/>
            <person name="Nori F."/>
            <person name="Ohara O."/>
            <person name="Okazaki Y."/>
            <person name="Orlando V."/>
            <person name="Pang K.C."/>
            <person name="Pavan W.J."/>
            <person name="Pavesi G."/>
            <person name="Pesole G."/>
            <person name="Petrovsky N."/>
            <person name="Piazza S."/>
            <person name="Reed J."/>
            <person name="Reid J.F."/>
            <person name="Ring B.Z."/>
            <person name="Ringwald M."/>
            <person name="Rost B."/>
            <person name="Ruan Y."/>
            <person name="Salzberg S.L."/>
            <person name="Sandelin A."/>
            <person name="Schneider C."/>
            <person name="Schoenbach C."/>
            <person name="Sekiguchi K."/>
            <person name="Semple C.A."/>
            <person name="Seno S."/>
            <person name="Sessa L."/>
            <person name="Sheng Y."/>
            <person name="Shibata Y."/>
            <person name="Shimada H."/>
            <person name="Shimada K."/>
            <person name="Silva D."/>
            <person name="Sinclair B."/>
            <person name="Sperling S."/>
            <person name="Stupka E."/>
            <person name="Sugiura K."/>
            <person name="Sultana R."/>
            <person name="Takenaka Y."/>
            <person name="Taki K."/>
            <person name="Tammoja K."/>
            <person name="Tan S.L."/>
            <person name="Tang S."/>
            <person name="Taylor M.S."/>
            <person name="Tegner J."/>
            <person name="Teichmann S.A."/>
            <person name="Ueda H.R."/>
            <person name="van Nimwegen E."/>
            <person name="Verardo R."/>
            <person name="Wei C.L."/>
            <person name="Yagi K."/>
            <person name="Yamanishi H."/>
            <person name="Zabarovsky E."/>
            <person name="Zhu S."/>
            <person name="Zimmer A."/>
            <person name="Hide W."/>
            <person name="Bult C."/>
            <person name="Grimmond S.M."/>
            <person name="Teasdale R.D."/>
            <person name="Liu E.T."/>
            <person name="Brusic V."/>
            <person name="Quackenbush J."/>
            <person name="Wahlestedt C."/>
            <person name="Mattick J.S."/>
            <person name="Hume D.A."/>
            <person name="Kai C."/>
            <person name="Sasaki D."/>
            <person name="Tomaru Y."/>
            <person name="Fukuda S."/>
            <person name="Kanamori-Katayama M."/>
            <person name="Suzuki M."/>
            <person name="Aoki J."/>
            <person name="Arakawa T."/>
            <person name="Iida J."/>
            <person name="Imamura K."/>
            <person name="Itoh M."/>
            <person name="Kato T."/>
            <person name="Kawaji H."/>
            <person name="Kawagashira N."/>
            <person name="Kawashima T."/>
            <person name="Kojima M."/>
            <person name="Kondo S."/>
            <person name="Konno H."/>
            <person name="Nakano K."/>
            <person name="Ninomiya N."/>
            <person name="Nishio T."/>
            <person name="Okada M."/>
            <person name="Plessy C."/>
            <person name="Shibata K."/>
            <person name="Shiraki T."/>
            <person name="Suzuki S."/>
            <person name="Tagami M."/>
            <person name="Waki K."/>
            <person name="Watahiki A."/>
            <person name="Okamura-Oho Y."/>
            <person name="Suzuki H."/>
            <person name="Kawai J."/>
            <person name="Hayashizaki Y."/>
        </authorList>
    </citation>
    <scope>NUCLEOTIDE SEQUENCE [LARGE SCALE MRNA]</scope>
    <source>
        <strain>C57BL/6J</strain>
        <tissue>Bone marrow</tissue>
        <tissue>Embryo</tissue>
        <tissue>Tongue</tissue>
    </source>
</reference>
<reference key="2">
    <citation type="journal article" date="2004" name="Genome Res.">
        <title>The status, quality, and expansion of the NIH full-length cDNA project: the Mammalian Gene Collection (MGC).</title>
        <authorList>
            <consortium name="The MGC Project Team"/>
        </authorList>
    </citation>
    <scope>NUCLEOTIDE SEQUENCE [LARGE SCALE MRNA]</scope>
    <source>
        <strain>C57BL/6J</strain>
        <tissue>Brain</tissue>
    </source>
</reference>
<reference key="3">
    <citation type="journal article" date="2009" name="Nat. Biotechnol.">
        <title>Mass-spectrometric identification and relative quantification of N-linked cell surface glycoproteins.</title>
        <authorList>
            <person name="Wollscheid B."/>
            <person name="Bausch-Fluck D."/>
            <person name="Henderson C."/>
            <person name="O'Brien R."/>
            <person name="Bibel M."/>
            <person name="Schiess R."/>
            <person name="Aebersold R."/>
            <person name="Watts J.D."/>
        </authorList>
    </citation>
    <scope>GLYCOSYLATION [LARGE SCALE ANALYSIS] AT ASN-42</scope>
</reference>
<reference key="4">
    <citation type="journal article" date="2010" name="Cell">
        <title>A tissue-specific atlas of mouse protein phosphorylation and expression.</title>
        <authorList>
            <person name="Huttlin E.L."/>
            <person name="Jedrychowski M.P."/>
            <person name="Elias J.E."/>
            <person name="Goswami T."/>
            <person name="Rad R."/>
            <person name="Beausoleil S.A."/>
            <person name="Villen J."/>
            <person name="Haas W."/>
            <person name="Sowa M.E."/>
            <person name="Gygi S.P."/>
        </authorList>
    </citation>
    <scope>IDENTIFICATION BY MASS SPECTROMETRY [LARGE SCALE ANALYSIS]</scope>
    <source>
        <tissue>Brain</tissue>
        <tissue>Kidney</tissue>
        <tissue>Liver</tissue>
    </source>
</reference>
<reference key="5">
    <citation type="journal article" date="2011" name="FEBS Lett.">
        <title>Predicted expansion of the claudin multigene family.</title>
        <authorList>
            <person name="Mineta K."/>
            <person name="Yamamoto Y."/>
            <person name="Yamazaki Y."/>
            <person name="Tanaka H."/>
            <person name="Tada Y."/>
            <person name="Saito K."/>
            <person name="Tamura A."/>
            <person name="Igarashi M."/>
            <person name="Endo T."/>
            <person name="Takeuchi K."/>
            <person name="Tsukita S."/>
        </authorList>
    </citation>
    <scope>IDENTIFICATION</scope>
    <scope>SUBCELLULAR LOCATION</scope>
</reference>
<reference key="6">
    <citation type="journal article" date="2017" name="J. Neurosci. Res.">
        <title>Claudin domain containing 1 contributing to endothelial cell adhesion decreases in presence of cerebellar hemorrhage.</title>
        <authorList>
            <person name="Ohnishi M."/>
            <person name="Ochiai H."/>
            <person name="Matsuoka K."/>
            <person name="Akagi M."/>
            <person name="Nakayama Y."/>
            <person name="Shima A."/>
            <person name="Uda A."/>
            <person name="Matsuoka H."/>
            <person name="Kamishikiryo J."/>
            <person name="Michihara A."/>
            <person name="Inoue A."/>
        </authorList>
    </citation>
    <scope>FUNCTION</scope>
    <scope>TISSUE SPECIFICITY</scope>
    <scope>INDUCTION</scope>
</reference>
<comment type="function">
    <text evidence="5">Plays a role in negatively regulating the permeability of cells to small molecules.</text>
</comment>
<comment type="subcellular location">
    <subcellularLocation>
        <location evidence="4">Cell junction</location>
        <location evidence="4">Tight junction</location>
    </subcellularLocation>
    <subcellularLocation>
        <location evidence="7">Cell membrane</location>
        <topology evidence="2">Multi-pass membrane protein</topology>
    </subcellularLocation>
</comment>
<comment type="tissue specificity">
    <text evidence="5">In the brain, highly expressed in endothelial cells of the cerebellum compared to other regions (at protein level).</text>
</comment>
<comment type="induction">
    <text evidence="5">Down-regulated in the cerebellum following cerebellar hemorrhage (at protein level).</text>
</comment>
<comment type="domain">
    <text evidence="1">The C-terminal region is required for localization to tight junctions which occurs in a TJP1/ZO1-independent manner.</text>
</comment>
<comment type="similarity">
    <text evidence="7">Belongs to the PMP-22/EMP/MP20 family.</text>
</comment>
<accession>Q9CQX5</accession>
<accession>Q3U7C4</accession>
<organism>
    <name type="scientific">Mus musculus</name>
    <name type="common">Mouse</name>
    <dbReference type="NCBI Taxonomy" id="10090"/>
    <lineage>
        <taxon>Eukaryota</taxon>
        <taxon>Metazoa</taxon>
        <taxon>Chordata</taxon>
        <taxon>Craniata</taxon>
        <taxon>Vertebrata</taxon>
        <taxon>Euteleostomi</taxon>
        <taxon>Mammalia</taxon>
        <taxon>Eutheria</taxon>
        <taxon>Euarchontoglires</taxon>
        <taxon>Glires</taxon>
        <taxon>Rodentia</taxon>
        <taxon>Myomorpha</taxon>
        <taxon>Muroidea</taxon>
        <taxon>Muridae</taxon>
        <taxon>Murinae</taxon>
        <taxon>Mus</taxon>
        <taxon>Mus</taxon>
    </lineage>
</organism>
<proteinExistence type="evidence at protein level"/>
<dbReference type="EMBL" id="AK003808">
    <property type="protein sequence ID" value="BAB23007.1"/>
    <property type="molecule type" value="mRNA"/>
</dbReference>
<dbReference type="EMBL" id="AK009432">
    <property type="protein sequence ID" value="BAB26284.1"/>
    <property type="molecule type" value="mRNA"/>
</dbReference>
<dbReference type="EMBL" id="AK009743">
    <property type="protein sequence ID" value="BAB26473.1"/>
    <property type="molecule type" value="mRNA"/>
</dbReference>
<dbReference type="EMBL" id="AK152121">
    <property type="protein sequence ID" value="BAE30964.1"/>
    <property type="molecule type" value="mRNA"/>
</dbReference>
<dbReference type="EMBL" id="AK152722">
    <property type="protein sequence ID" value="BAE31445.1"/>
    <property type="molecule type" value="mRNA"/>
</dbReference>
<dbReference type="EMBL" id="BC055695">
    <property type="protein sequence ID" value="AAH55695.1"/>
    <property type="molecule type" value="mRNA"/>
</dbReference>
<dbReference type="CCDS" id="CCDS28234.1"/>
<dbReference type="RefSeq" id="NP_001343417.1">
    <property type="nucleotide sequence ID" value="NM_001356488.1"/>
</dbReference>
<dbReference type="RefSeq" id="NP_741968.1">
    <property type="nucleotide sequence ID" value="NM_171826.3"/>
</dbReference>
<dbReference type="RefSeq" id="XP_006522157.1">
    <property type="nucleotide sequence ID" value="XM_006522094.3"/>
</dbReference>
<dbReference type="BioGRID" id="230260">
    <property type="interactions" value="1"/>
</dbReference>
<dbReference type="FunCoup" id="Q9CQX5">
    <property type="interactions" value="659"/>
</dbReference>
<dbReference type="IntAct" id="Q9CQX5">
    <property type="interactions" value="1"/>
</dbReference>
<dbReference type="MINT" id="Q9CQX5"/>
<dbReference type="STRING" id="10090.ENSMUSP00000023426"/>
<dbReference type="GlyConnect" id="2217">
    <property type="glycosylation" value="2 N-Linked glycans (1 site)"/>
</dbReference>
<dbReference type="GlyCosmos" id="Q9CQX5">
    <property type="glycosylation" value="2 sites, 2 glycans"/>
</dbReference>
<dbReference type="GlyGen" id="Q9CQX5">
    <property type="glycosylation" value="2 sites, 4 N-linked glycans (2 sites)"/>
</dbReference>
<dbReference type="iPTMnet" id="Q9CQX5"/>
<dbReference type="PhosphoSitePlus" id="Q9CQX5"/>
<dbReference type="SwissPalm" id="Q9CQX5"/>
<dbReference type="jPOST" id="Q9CQX5"/>
<dbReference type="PaxDb" id="10090-ENSMUSP00000125497"/>
<dbReference type="PeptideAtlas" id="Q9CQX5"/>
<dbReference type="ProteomicsDB" id="283381"/>
<dbReference type="Pumba" id="Q9CQX5"/>
<dbReference type="Antibodypedia" id="32146">
    <property type="antibodies" value="154 antibodies from 25 providers"/>
</dbReference>
<dbReference type="DNASU" id="224250"/>
<dbReference type="Ensembl" id="ENSMUST00000023426.12">
    <property type="protein sequence ID" value="ENSMUSP00000023426.6"/>
    <property type="gene ID" value="ENSMUSG00000022744.13"/>
</dbReference>
<dbReference type="Ensembl" id="ENSMUST00000162057.8">
    <property type="protein sequence ID" value="ENSMUSP00000125497.2"/>
    <property type="gene ID" value="ENSMUSG00000022744.13"/>
</dbReference>
<dbReference type="GeneID" id="224250"/>
<dbReference type="KEGG" id="mmu:224250"/>
<dbReference type="UCSC" id="uc007zoc.2">
    <property type="organism name" value="mouse"/>
</dbReference>
<dbReference type="AGR" id="MGI:2447860"/>
<dbReference type="CTD" id="56650"/>
<dbReference type="MGI" id="MGI:2447860">
    <property type="gene designation" value="Cldnd1"/>
</dbReference>
<dbReference type="VEuPathDB" id="HostDB:ENSMUSG00000022744"/>
<dbReference type="eggNOG" id="ENOG502QRAV">
    <property type="taxonomic scope" value="Eukaryota"/>
</dbReference>
<dbReference type="GeneTree" id="ENSGT00390000002596"/>
<dbReference type="HOGENOM" id="CLU_071844_0_0_1"/>
<dbReference type="InParanoid" id="Q9CQX5"/>
<dbReference type="OMA" id="NKSIWED"/>
<dbReference type="OrthoDB" id="9885915at2759"/>
<dbReference type="PhylomeDB" id="Q9CQX5"/>
<dbReference type="TreeFam" id="TF331244"/>
<dbReference type="BioGRID-ORCS" id="224250">
    <property type="hits" value="1 hit in 56 CRISPR screens"/>
</dbReference>
<dbReference type="ChiTaRS" id="Cldnd1">
    <property type="organism name" value="mouse"/>
</dbReference>
<dbReference type="PRO" id="PR:Q9CQX5"/>
<dbReference type="Proteomes" id="UP000000589">
    <property type="component" value="Chromosome 16"/>
</dbReference>
<dbReference type="RNAct" id="Q9CQX5">
    <property type="molecule type" value="protein"/>
</dbReference>
<dbReference type="Bgee" id="ENSMUSG00000022744">
    <property type="expression patterns" value="Expressed in rostral migratory stream and 255 other cell types or tissues"/>
</dbReference>
<dbReference type="ExpressionAtlas" id="Q9CQX5">
    <property type="expression patterns" value="baseline and differential"/>
</dbReference>
<dbReference type="GO" id="GO:0016324">
    <property type="term" value="C:apical plasma membrane"/>
    <property type="evidence" value="ECO:0000314"/>
    <property type="project" value="MGI"/>
</dbReference>
<dbReference type="FunFam" id="1.20.140.150:FF:000009">
    <property type="entry name" value="Claudin domain-containing protein 1"/>
    <property type="match status" value="1"/>
</dbReference>
<dbReference type="Gene3D" id="1.20.140.150">
    <property type="match status" value="1"/>
</dbReference>
<dbReference type="InterPro" id="IPR042356">
    <property type="entry name" value="CLDN1"/>
</dbReference>
<dbReference type="InterPro" id="IPR004031">
    <property type="entry name" value="PMP22/EMP/MP20/Claudin"/>
</dbReference>
<dbReference type="PANTHER" id="PTHR14347">
    <property type="entry name" value="CLAUDIN DOMAIN-CONTAINING PROTEIN 1"/>
    <property type="match status" value="1"/>
</dbReference>
<dbReference type="PANTHER" id="PTHR14347:SF3">
    <property type="entry name" value="CLAUDIN DOMAIN-CONTAINING PROTEIN 1"/>
    <property type="match status" value="1"/>
</dbReference>
<dbReference type="Pfam" id="PF13903">
    <property type="entry name" value="Claudin_2"/>
    <property type="match status" value="1"/>
</dbReference>
<protein>
    <recommendedName>
        <fullName>Claudin domain-containing protein 1</fullName>
    </recommendedName>
    <alternativeName>
        <fullName evidence="6">Claudin-25</fullName>
    </alternativeName>
</protein>
<sequence>MDNRFATAFVIACVLSLISTIYMAASIGTDFWYEYRSPIQENSSDSNKIAWEDFLGDEADEKTYNDVLFRYNGSLGLWRRCITIPKNTHWYAPPERTESFDVVTKCMSFTLNEQFMEKYVDPGNHNSGIDLLRTYLWRCQFLLPFVSLGLMCFGALIGLCACICRSLYPTLATGILHLLAGLCTLGSVSCYVAGIELLHQKVELPKDVSGEFGWSFCLACVSAPLQFMAAALFIWAAHTNRKEYTLMKAYRVA</sequence>
<feature type="chain" id="PRO_0000164695" description="Claudin domain-containing protein 1">
    <location>
        <begin position="1"/>
        <end position="253"/>
    </location>
</feature>
<feature type="transmembrane region" description="Helical" evidence="2">
    <location>
        <begin position="5"/>
        <end position="25"/>
    </location>
</feature>
<feature type="transmembrane region" description="Helical" evidence="2">
    <location>
        <begin position="141"/>
        <end position="161"/>
    </location>
</feature>
<feature type="transmembrane region" description="Helical" evidence="2">
    <location>
        <begin position="175"/>
        <end position="195"/>
    </location>
</feature>
<feature type="transmembrane region" description="Helical" evidence="2">
    <location>
        <begin position="216"/>
        <end position="236"/>
    </location>
</feature>
<feature type="glycosylation site" description="N-linked (GlcNAc...) asparagine" evidence="3">
    <location>
        <position position="42"/>
    </location>
</feature>
<feature type="glycosylation site" description="N-linked (GlcNAc...) asparagine" evidence="2">
    <location>
        <position position="72"/>
    </location>
</feature>
<name>CLDN1_MOUSE</name>
<keyword id="KW-0965">Cell junction</keyword>
<keyword id="KW-1003">Cell membrane</keyword>
<keyword id="KW-0325">Glycoprotein</keyword>
<keyword id="KW-0472">Membrane</keyword>
<keyword id="KW-1185">Reference proteome</keyword>
<keyword id="KW-0796">Tight junction</keyword>
<keyword id="KW-0812">Transmembrane</keyword>
<keyword id="KW-1133">Transmembrane helix</keyword>
<evidence type="ECO:0000250" key="1">
    <source>
        <dbReference type="UniProtKB" id="Q9NY35"/>
    </source>
</evidence>
<evidence type="ECO:0000255" key="2"/>
<evidence type="ECO:0000269" key="3">
    <source>
    </source>
</evidence>
<evidence type="ECO:0000269" key="4">
    <source>
    </source>
</evidence>
<evidence type="ECO:0000269" key="5">
    <source>
    </source>
</evidence>
<evidence type="ECO:0000303" key="6">
    <source>
    </source>
</evidence>
<evidence type="ECO:0000305" key="7"/>